<dbReference type="EC" id="3.1.4.-" evidence="1"/>
<dbReference type="EC" id="3.6.1.15" evidence="5"/>
<dbReference type="EMBL" id="Y08135">
    <property type="protein sequence ID" value="CAA69329.1"/>
    <property type="molecule type" value="mRNA"/>
</dbReference>
<dbReference type="EMBL" id="AK151683">
    <property type="protein sequence ID" value="BAE30607.1"/>
    <property type="molecule type" value="mRNA"/>
</dbReference>
<dbReference type="EMBL" id="AK152282">
    <property type="protein sequence ID" value="BAE31096.1"/>
    <property type="molecule type" value="mRNA"/>
</dbReference>
<dbReference type="EMBL" id="CH466540">
    <property type="protein sequence ID" value="EDL05124.1"/>
    <property type="molecule type" value="Genomic_DNA"/>
</dbReference>
<dbReference type="EMBL" id="BC139288">
    <property type="protein sequence ID" value="AAI39289.1"/>
    <property type="molecule type" value="mRNA"/>
</dbReference>
<dbReference type="EMBL" id="BC139289">
    <property type="protein sequence ID" value="AAI39290.1"/>
    <property type="molecule type" value="mRNA"/>
</dbReference>
<dbReference type="CCDS" id="CCDS23857.1"/>
<dbReference type="RefSeq" id="NP_065586.3">
    <property type="nucleotide sequence ID" value="NM_020561.2"/>
</dbReference>
<dbReference type="PDB" id="5FC1">
    <property type="method" value="X-ray"/>
    <property type="resolution" value="1.39 A"/>
    <property type="chains" value="A=23-445"/>
</dbReference>
<dbReference type="PDB" id="5FC5">
    <property type="method" value="X-ray"/>
    <property type="resolution" value="1.68 A"/>
    <property type="chains" value="A=23-445"/>
</dbReference>
<dbReference type="PDB" id="5FC6">
    <property type="method" value="X-ray"/>
    <property type="resolution" value="1.66 A"/>
    <property type="chains" value="A=23-445"/>
</dbReference>
<dbReference type="PDB" id="5FC7">
    <property type="method" value="X-ray"/>
    <property type="resolution" value="1.46 A"/>
    <property type="chains" value="A=23-445"/>
</dbReference>
<dbReference type="PDB" id="5FCA">
    <property type="method" value="X-ray"/>
    <property type="resolution" value="1.92 A"/>
    <property type="chains" value="A/B=23-445"/>
</dbReference>
<dbReference type="PDB" id="5FCB">
    <property type="method" value="X-ray"/>
    <property type="resolution" value="1.55 A"/>
    <property type="chains" value="A=23-445"/>
</dbReference>
<dbReference type="PDB" id="8W6P">
    <property type="method" value="X-ray"/>
    <property type="resolution" value="1.91 A"/>
    <property type="chains" value="A/B=33-445"/>
</dbReference>
<dbReference type="PDB" id="8W6R">
    <property type="method" value="X-ray"/>
    <property type="resolution" value="1.95 A"/>
    <property type="chains" value="A=23-444"/>
</dbReference>
<dbReference type="PDBsum" id="5FC1"/>
<dbReference type="PDBsum" id="5FC5"/>
<dbReference type="PDBsum" id="5FC6"/>
<dbReference type="PDBsum" id="5FC7"/>
<dbReference type="PDBsum" id="5FCA"/>
<dbReference type="PDBsum" id="5FCB"/>
<dbReference type="PDBsum" id="8W6P"/>
<dbReference type="PDBsum" id="8W6R"/>
<dbReference type="SMR" id="P70158"/>
<dbReference type="BioGRID" id="208256">
    <property type="interactions" value="2"/>
</dbReference>
<dbReference type="FunCoup" id="P70158">
    <property type="interactions" value="204"/>
</dbReference>
<dbReference type="STRING" id="10090.ENSMUSP00000020022"/>
<dbReference type="GlyConnect" id="2103">
    <property type="glycosylation" value="1 N-Linked glycan (1 site)"/>
</dbReference>
<dbReference type="GlyCosmos" id="P70158">
    <property type="glycosylation" value="6 sites, 1 glycan"/>
</dbReference>
<dbReference type="GlyGen" id="P70158">
    <property type="glycosylation" value="7 sites, 3 N-linked glycans (2 sites)"/>
</dbReference>
<dbReference type="iPTMnet" id="P70158"/>
<dbReference type="PhosphoSitePlus" id="P70158"/>
<dbReference type="jPOST" id="P70158"/>
<dbReference type="PaxDb" id="10090-ENSMUSP00000020022"/>
<dbReference type="PeptideAtlas" id="P70158"/>
<dbReference type="ProteomicsDB" id="281813"/>
<dbReference type="Antibodypedia" id="32649">
    <property type="antibodies" value="133 antibodies from 22 providers"/>
</dbReference>
<dbReference type="DNASU" id="57319"/>
<dbReference type="Ensembl" id="ENSMUST00000020022.8">
    <property type="protein sequence ID" value="ENSMUSP00000020022.8"/>
    <property type="gene ID" value="ENSMUSG00000019872.14"/>
</dbReference>
<dbReference type="GeneID" id="57319"/>
<dbReference type="KEGG" id="mmu:57319"/>
<dbReference type="UCSC" id="uc007fcu.1">
    <property type="organism name" value="mouse"/>
</dbReference>
<dbReference type="AGR" id="MGI:1931437"/>
<dbReference type="CTD" id="10924"/>
<dbReference type="MGI" id="MGI:1931437">
    <property type="gene designation" value="Smpdl3a"/>
</dbReference>
<dbReference type="VEuPathDB" id="HostDB:ENSMUSG00000019872"/>
<dbReference type="eggNOG" id="KOG3770">
    <property type="taxonomic scope" value="Eukaryota"/>
</dbReference>
<dbReference type="GeneTree" id="ENSGT00950000183182"/>
<dbReference type="HOGENOM" id="CLU_014743_0_0_1"/>
<dbReference type="InParanoid" id="P70158"/>
<dbReference type="OMA" id="TAWHCRS"/>
<dbReference type="OrthoDB" id="348678at2759"/>
<dbReference type="PhylomeDB" id="P70158"/>
<dbReference type="TreeFam" id="TF313674"/>
<dbReference type="BRENDA" id="3.1.4.1">
    <property type="organism ID" value="3474"/>
</dbReference>
<dbReference type="SABIO-RK" id="P70158"/>
<dbReference type="BioGRID-ORCS" id="57319">
    <property type="hits" value="1 hit in 79 CRISPR screens"/>
</dbReference>
<dbReference type="ChiTaRS" id="Smpdl3a">
    <property type="organism name" value="mouse"/>
</dbReference>
<dbReference type="EvolutionaryTrace" id="P70158"/>
<dbReference type="PRO" id="PR:P70158"/>
<dbReference type="Proteomes" id="UP000000589">
    <property type="component" value="Chromosome 10"/>
</dbReference>
<dbReference type="RNAct" id="P70158">
    <property type="molecule type" value="protein"/>
</dbReference>
<dbReference type="Bgee" id="ENSMUSG00000019872">
    <property type="expression patterns" value="Expressed in parotid gland and 260 other cell types or tissues"/>
</dbReference>
<dbReference type="ExpressionAtlas" id="P70158">
    <property type="expression patterns" value="baseline and differential"/>
</dbReference>
<dbReference type="GO" id="GO:0005576">
    <property type="term" value="C:extracellular region"/>
    <property type="evidence" value="ECO:0000314"/>
    <property type="project" value="UniProtKB"/>
</dbReference>
<dbReference type="GO" id="GO:0005615">
    <property type="term" value="C:extracellular space"/>
    <property type="evidence" value="ECO:0000314"/>
    <property type="project" value="UniProtKB"/>
</dbReference>
<dbReference type="GO" id="GO:0016887">
    <property type="term" value="F:ATP hydrolysis activity"/>
    <property type="evidence" value="ECO:0007669"/>
    <property type="project" value="RHEA"/>
</dbReference>
<dbReference type="GO" id="GO:0008081">
    <property type="term" value="F:phosphoric diester hydrolase activity"/>
    <property type="evidence" value="ECO:0000250"/>
    <property type="project" value="UniProtKB"/>
</dbReference>
<dbReference type="GO" id="GO:0008270">
    <property type="term" value="F:zinc ion binding"/>
    <property type="evidence" value="ECO:0000250"/>
    <property type="project" value="UniProtKB"/>
</dbReference>
<dbReference type="GO" id="GO:0160049">
    <property type="term" value="P:negative regulation of cGAS/STING signaling pathway"/>
    <property type="evidence" value="ECO:0000315"/>
    <property type="project" value="UniProtKB"/>
</dbReference>
<dbReference type="GO" id="GO:0009143">
    <property type="term" value="P:nucleoside triphosphate catabolic process"/>
    <property type="evidence" value="ECO:0000250"/>
    <property type="project" value="UniProtKB"/>
</dbReference>
<dbReference type="CDD" id="cd00842">
    <property type="entry name" value="MPP_ASMase"/>
    <property type="match status" value="1"/>
</dbReference>
<dbReference type="FunFam" id="3.60.21.10:FF:000044">
    <property type="entry name" value="acid sphingomyelinase-like phosphodiesterase 3a"/>
    <property type="match status" value="1"/>
</dbReference>
<dbReference type="Gene3D" id="3.60.21.10">
    <property type="match status" value="1"/>
</dbReference>
<dbReference type="InterPro" id="IPR017064">
    <property type="entry name" value="ASM-like_Pdiesterase_prd"/>
</dbReference>
<dbReference type="InterPro" id="IPR045473">
    <property type="entry name" value="ASM_C"/>
</dbReference>
<dbReference type="InterPro" id="IPR041805">
    <property type="entry name" value="ASMase/PPN1_MPP"/>
</dbReference>
<dbReference type="InterPro" id="IPR004843">
    <property type="entry name" value="Calcineurin-like_PHP_ApaH"/>
</dbReference>
<dbReference type="InterPro" id="IPR029052">
    <property type="entry name" value="Metallo-depent_PP-like"/>
</dbReference>
<dbReference type="PANTHER" id="PTHR10340:SF24">
    <property type="entry name" value="ACID SPHINGOMYELINASE-LIKE PHOSPHODIESTERASE 3A"/>
    <property type="match status" value="1"/>
</dbReference>
<dbReference type="PANTHER" id="PTHR10340">
    <property type="entry name" value="SPHINGOMYELIN PHOSPHODIESTERASE"/>
    <property type="match status" value="1"/>
</dbReference>
<dbReference type="Pfam" id="PF19272">
    <property type="entry name" value="ASMase_C"/>
    <property type="match status" value="1"/>
</dbReference>
<dbReference type="Pfam" id="PF00149">
    <property type="entry name" value="Metallophos"/>
    <property type="match status" value="1"/>
</dbReference>
<dbReference type="PIRSF" id="PIRSF036767">
    <property type="entry name" value="ASM-like_PDE"/>
    <property type="match status" value="1"/>
</dbReference>
<dbReference type="SUPFAM" id="SSF56300">
    <property type="entry name" value="Metallo-dependent phosphatases"/>
    <property type="match status" value="1"/>
</dbReference>
<accession>P70158</accession>
<accession>Q3U8C2</accession>
<reference key="1">
    <citation type="submission" date="1996-09" db="EMBL/GenBank/DDBJ databases">
        <title>Acid sphingomyelinase is a member of a multi-gene family and shares motifs with a large family of metallo-phosphoesterases.</title>
        <authorList>
            <person name="Hofmann K."/>
        </authorList>
    </citation>
    <scope>NUCLEOTIDE SEQUENCE [MRNA]</scope>
</reference>
<reference key="2">
    <citation type="journal article" date="2005" name="Science">
        <title>The transcriptional landscape of the mammalian genome.</title>
        <authorList>
            <person name="Carninci P."/>
            <person name="Kasukawa T."/>
            <person name="Katayama S."/>
            <person name="Gough J."/>
            <person name="Frith M.C."/>
            <person name="Maeda N."/>
            <person name="Oyama R."/>
            <person name="Ravasi T."/>
            <person name="Lenhard B."/>
            <person name="Wells C."/>
            <person name="Kodzius R."/>
            <person name="Shimokawa K."/>
            <person name="Bajic V.B."/>
            <person name="Brenner S.E."/>
            <person name="Batalov S."/>
            <person name="Forrest A.R."/>
            <person name="Zavolan M."/>
            <person name="Davis M.J."/>
            <person name="Wilming L.G."/>
            <person name="Aidinis V."/>
            <person name="Allen J.E."/>
            <person name="Ambesi-Impiombato A."/>
            <person name="Apweiler R."/>
            <person name="Aturaliya R.N."/>
            <person name="Bailey T.L."/>
            <person name="Bansal M."/>
            <person name="Baxter L."/>
            <person name="Beisel K.W."/>
            <person name="Bersano T."/>
            <person name="Bono H."/>
            <person name="Chalk A.M."/>
            <person name="Chiu K.P."/>
            <person name="Choudhary V."/>
            <person name="Christoffels A."/>
            <person name="Clutterbuck D.R."/>
            <person name="Crowe M.L."/>
            <person name="Dalla E."/>
            <person name="Dalrymple B.P."/>
            <person name="de Bono B."/>
            <person name="Della Gatta G."/>
            <person name="di Bernardo D."/>
            <person name="Down T."/>
            <person name="Engstrom P."/>
            <person name="Fagiolini M."/>
            <person name="Faulkner G."/>
            <person name="Fletcher C.F."/>
            <person name="Fukushima T."/>
            <person name="Furuno M."/>
            <person name="Futaki S."/>
            <person name="Gariboldi M."/>
            <person name="Georgii-Hemming P."/>
            <person name="Gingeras T.R."/>
            <person name="Gojobori T."/>
            <person name="Green R.E."/>
            <person name="Gustincich S."/>
            <person name="Harbers M."/>
            <person name="Hayashi Y."/>
            <person name="Hensch T.K."/>
            <person name="Hirokawa N."/>
            <person name="Hill D."/>
            <person name="Huminiecki L."/>
            <person name="Iacono M."/>
            <person name="Ikeo K."/>
            <person name="Iwama A."/>
            <person name="Ishikawa T."/>
            <person name="Jakt M."/>
            <person name="Kanapin A."/>
            <person name="Katoh M."/>
            <person name="Kawasawa Y."/>
            <person name="Kelso J."/>
            <person name="Kitamura H."/>
            <person name="Kitano H."/>
            <person name="Kollias G."/>
            <person name="Krishnan S.P."/>
            <person name="Kruger A."/>
            <person name="Kummerfeld S.K."/>
            <person name="Kurochkin I.V."/>
            <person name="Lareau L.F."/>
            <person name="Lazarevic D."/>
            <person name="Lipovich L."/>
            <person name="Liu J."/>
            <person name="Liuni S."/>
            <person name="McWilliam S."/>
            <person name="Madan Babu M."/>
            <person name="Madera M."/>
            <person name="Marchionni L."/>
            <person name="Matsuda H."/>
            <person name="Matsuzawa S."/>
            <person name="Miki H."/>
            <person name="Mignone F."/>
            <person name="Miyake S."/>
            <person name="Morris K."/>
            <person name="Mottagui-Tabar S."/>
            <person name="Mulder N."/>
            <person name="Nakano N."/>
            <person name="Nakauchi H."/>
            <person name="Ng P."/>
            <person name="Nilsson R."/>
            <person name="Nishiguchi S."/>
            <person name="Nishikawa S."/>
            <person name="Nori F."/>
            <person name="Ohara O."/>
            <person name="Okazaki Y."/>
            <person name="Orlando V."/>
            <person name="Pang K.C."/>
            <person name="Pavan W.J."/>
            <person name="Pavesi G."/>
            <person name="Pesole G."/>
            <person name="Petrovsky N."/>
            <person name="Piazza S."/>
            <person name="Reed J."/>
            <person name="Reid J.F."/>
            <person name="Ring B.Z."/>
            <person name="Ringwald M."/>
            <person name="Rost B."/>
            <person name="Ruan Y."/>
            <person name="Salzberg S.L."/>
            <person name="Sandelin A."/>
            <person name="Schneider C."/>
            <person name="Schoenbach C."/>
            <person name="Sekiguchi K."/>
            <person name="Semple C.A."/>
            <person name="Seno S."/>
            <person name="Sessa L."/>
            <person name="Sheng Y."/>
            <person name="Shibata Y."/>
            <person name="Shimada H."/>
            <person name="Shimada K."/>
            <person name="Silva D."/>
            <person name="Sinclair B."/>
            <person name="Sperling S."/>
            <person name="Stupka E."/>
            <person name="Sugiura K."/>
            <person name="Sultana R."/>
            <person name="Takenaka Y."/>
            <person name="Taki K."/>
            <person name="Tammoja K."/>
            <person name="Tan S.L."/>
            <person name="Tang S."/>
            <person name="Taylor M.S."/>
            <person name="Tegner J."/>
            <person name="Teichmann S.A."/>
            <person name="Ueda H.R."/>
            <person name="van Nimwegen E."/>
            <person name="Verardo R."/>
            <person name="Wei C.L."/>
            <person name="Yagi K."/>
            <person name="Yamanishi H."/>
            <person name="Zabarovsky E."/>
            <person name="Zhu S."/>
            <person name="Zimmer A."/>
            <person name="Hide W."/>
            <person name="Bult C."/>
            <person name="Grimmond S.M."/>
            <person name="Teasdale R.D."/>
            <person name="Liu E.T."/>
            <person name="Brusic V."/>
            <person name="Quackenbush J."/>
            <person name="Wahlestedt C."/>
            <person name="Mattick J.S."/>
            <person name="Hume D.A."/>
            <person name="Kai C."/>
            <person name="Sasaki D."/>
            <person name="Tomaru Y."/>
            <person name="Fukuda S."/>
            <person name="Kanamori-Katayama M."/>
            <person name="Suzuki M."/>
            <person name="Aoki J."/>
            <person name="Arakawa T."/>
            <person name="Iida J."/>
            <person name="Imamura K."/>
            <person name="Itoh M."/>
            <person name="Kato T."/>
            <person name="Kawaji H."/>
            <person name="Kawagashira N."/>
            <person name="Kawashima T."/>
            <person name="Kojima M."/>
            <person name="Kondo S."/>
            <person name="Konno H."/>
            <person name="Nakano K."/>
            <person name="Ninomiya N."/>
            <person name="Nishio T."/>
            <person name="Okada M."/>
            <person name="Plessy C."/>
            <person name="Shibata K."/>
            <person name="Shiraki T."/>
            <person name="Suzuki S."/>
            <person name="Tagami M."/>
            <person name="Waki K."/>
            <person name="Watahiki A."/>
            <person name="Okamura-Oho Y."/>
            <person name="Suzuki H."/>
            <person name="Kawai J."/>
            <person name="Hayashizaki Y."/>
        </authorList>
    </citation>
    <scope>NUCLEOTIDE SEQUENCE [LARGE SCALE MRNA]</scope>
    <source>
        <strain>C57BL/6J</strain>
        <tissue>Bone marrow</tissue>
    </source>
</reference>
<reference key="3">
    <citation type="submission" date="2005-07" db="EMBL/GenBank/DDBJ databases">
        <authorList>
            <person name="Mural R.J."/>
            <person name="Adams M.D."/>
            <person name="Myers E.W."/>
            <person name="Smith H.O."/>
            <person name="Venter J.C."/>
        </authorList>
    </citation>
    <scope>NUCLEOTIDE SEQUENCE [LARGE SCALE GENOMIC DNA]</scope>
</reference>
<reference key="4">
    <citation type="journal article" date="2004" name="Genome Res.">
        <title>The status, quality, and expansion of the NIH full-length cDNA project: the Mammalian Gene Collection (MGC).</title>
        <authorList>
            <consortium name="The MGC Project Team"/>
        </authorList>
    </citation>
    <scope>NUCLEOTIDE SEQUENCE [LARGE SCALE MRNA]</scope>
    <source>
        <tissue>Brain</tissue>
    </source>
</reference>
<reference key="5">
    <citation type="journal article" date="2010" name="Cell">
        <title>A tissue-specific atlas of mouse protein phosphorylation and expression.</title>
        <authorList>
            <person name="Huttlin E.L."/>
            <person name="Jedrychowski M.P."/>
            <person name="Elias J.E."/>
            <person name="Goswami T."/>
            <person name="Rad R."/>
            <person name="Beausoleil S.A."/>
            <person name="Villen J."/>
            <person name="Haas W."/>
            <person name="Sowa M.E."/>
            <person name="Gygi S.P."/>
        </authorList>
    </citation>
    <scope>IDENTIFICATION BY MASS SPECTROMETRY [LARGE SCALE ANALYSIS]</scope>
    <source>
        <tissue>Brain</tissue>
        <tissue>Brown adipose tissue</tissue>
        <tissue>Heart</tissue>
        <tissue>Kidney</tissue>
        <tissue>Liver</tissue>
        <tissue>Lung</tissue>
        <tissue>Pancreas</tissue>
        <tissue>Spleen</tissue>
    </source>
</reference>
<reference key="6">
    <citation type="journal article" date="2014" name="J. Biol. Chem.">
        <title>Sphingomyelin phosphodiesterase acid-like 3A (SMPDL3A) is a novel nucleotide phosphodiesterase regulated by cholesterol in human macrophages.</title>
        <authorList>
            <person name="Traini M."/>
            <person name="Quinn C.M."/>
            <person name="Sandoval C."/>
            <person name="Johansson E."/>
            <person name="Schroder K."/>
            <person name="Kockx M."/>
            <person name="Meikle P.J."/>
            <person name="Jessup W."/>
            <person name="Kritharides L."/>
        </authorList>
    </citation>
    <scope>SUBCELLULAR LOCATION</scope>
    <scope>TISSUE SPECIFICITY</scope>
</reference>
<reference key="7">
    <citation type="journal article" date="2015" name="Cell Rep.">
        <title>The lipid-modifying enzyme SMPDL3B negatively regulates innate immunity.</title>
        <authorList>
            <person name="Heinz L.X."/>
            <person name="Baumann C.L."/>
            <person name="Koeberlin M.S."/>
            <person name="Snijder B."/>
            <person name="Gawish R."/>
            <person name="Shui G."/>
            <person name="Sharif O."/>
            <person name="Aspalter I.M."/>
            <person name="Mueller A.C."/>
            <person name="Kandasamy R.K."/>
            <person name="Breitwieser F.P."/>
            <person name="Pichlmair A."/>
            <person name="Bruckner M."/>
            <person name="Rebsamen M."/>
            <person name="Blueml S."/>
            <person name="Karonitsch T."/>
            <person name="Fauster A."/>
            <person name="Colinge J."/>
            <person name="Bennett K.L."/>
            <person name="Knapp S."/>
            <person name="Wenk M.R."/>
            <person name="Superti-Furga G."/>
        </authorList>
    </citation>
    <scope>SUBCELLULAR LOCATION</scope>
    <scope>GLYCOSYLATION</scope>
</reference>
<reference key="8">
    <citation type="journal article" date="2023" name="Immunity">
        <title>SMPDL3A is a cGAMP-degrading enzyme induced by LXR-mediated lipid metabolism to restrict cGAS-STING DNA sensing.</title>
        <authorList>
            <person name="Hou Y."/>
            <person name="Wang Z."/>
            <person name="Liu P."/>
            <person name="Wei X."/>
            <person name="Zhang Z."/>
            <person name="Fan S."/>
            <person name="Zhang L."/>
            <person name="Han F."/>
            <person name="Song Y."/>
            <person name="Chu L."/>
            <person name="Zhang C."/>
        </authorList>
    </citation>
    <scope>FUNCTION</scope>
</reference>
<reference key="9">
    <citation type="journal article" date="2016" name="J. Biol. Chem.">
        <title>Structural basis for nucleotide hydrolysis by the acid sphingomyelinase-like phosphodiesterase SMPDL3A.</title>
        <authorList>
            <person name="Gorelik A."/>
            <person name="Illes K."/>
            <person name="Superti-Furga G."/>
            <person name="Nagar B."/>
        </authorList>
    </citation>
    <scope>X-RAY CRYSTALLOGRAPHY (1.39 ANGSTROMS) OF 23-445 IN COMPLEXES WITH ZINC IONS; ATP ANALOG AND PHOSPHOCHOLINE</scope>
    <scope>FUNCTION</scope>
    <scope>CATALYTIC ACTIVITY</scope>
    <scope>COFACTOR</scope>
    <scope>ACTIVITY REGULATION</scope>
    <scope>BIOPHYSICOCHEMICAL PROPERTIES</scope>
    <scope>MUTAGENESIS OF HIS-111 AND HIS-149</scope>
    <scope>SUBCELLULAR LOCATION</scope>
    <scope>GLYCOSYLATION AT ASN-66; ASN-128; ASN-235; ASN-353 AND ASN-364</scope>
    <scope>DISULFIDE BONDS</scope>
</reference>
<evidence type="ECO:0000250" key="1">
    <source>
        <dbReference type="UniProtKB" id="Q92484"/>
    </source>
</evidence>
<evidence type="ECO:0000255" key="2"/>
<evidence type="ECO:0000269" key="3">
    <source>
    </source>
</evidence>
<evidence type="ECO:0000269" key="4">
    <source>
    </source>
</evidence>
<evidence type="ECO:0000269" key="5">
    <source>
    </source>
</evidence>
<evidence type="ECO:0000269" key="6">
    <source>
    </source>
</evidence>
<evidence type="ECO:0000303" key="7">
    <source>
    </source>
</evidence>
<evidence type="ECO:0000305" key="8"/>
<evidence type="ECO:0000305" key="9">
    <source>
    </source>
</evidence>
<evidence type="ECO:0000312" key="10">
    <source>
        <dbReference type="MGI" id="MGI:1931437"/>
    </source>
</evidence>
<evidence type="ECO:0007829" key="11">
    <source>
        <dbReference type="PDB" id="5FC1"/>
    </source>
</evidence>
<protein>
    <recommendedName>
        <fullName evidence="8">Cyclic GMP-AMP phosphodiesterase SMPDL3A</fullName>
        <shortName evidence="8">2',3'-cGAMP phosphodiesterase SMPDL3A</shortName>
        <ecNumber evidence="1">3.1.4.-</ecNumber>
    </recommendedName>
    <alternativeName>
        <fullName>Acid sphingomyelinase-like phosphodiesterase 3a</fullName>
        <shortName>ASM-like phosphodiesterase 3a</shortName>
        <ecNumber evidence="5">3.6.1.15</ecNumber>
    </alternativeName>
</protein>
<feature type="signal peptide" evidence="2">
    <location>
        <begin position="1"/>
        <end position="22"/>
    </location>
</feature>
<feature type="chain" id="PRO_0000002329" description="Cyclic GMP-AMP phosphodiesterase SMPDL3A">
    <location>
        <begin position="23"/>
        <end position="445"/>
    </location>
</feature>
<feature type="binding site" evidence="5">
    <location>
        <position position="42"/>
    </location>
    <ligand>
        <name>Zn(2+)</name>
        <dbReference type="ChEBI" id="CHEBI:29105"/>
        <label>1</label>
    </ligand>
</feature>
<feature type="binding site" evidence="5">
    <location>
        <position position="44"/>
    </location>
    <ligand>
        <name>Zn(2+)</name>
        <dbReference type="ChEBI" id="CHEBI:29105"/>
        <label>1</label>
    </ligand>
</feature>
<feature type="binding site" evidence="5">
    <location>
        <position position="107"/>
    </location>
    <ligand>
        <name>Zn(2+)</name>
        <dbReference type="ChEBI" id="CHEBI:29105"/>
        <label>1</label>
    </ligand>
</feature>
<feature type="binding site" evidence="5">
    <location>
        <position position="107"/>
    </location>
    <ligand>
        <name>Zn(2+)</name>
        <dbReference type="ChEBI" id="CHEBI:29105"/>
        <label>2</label>
    </ligand>
</feature>
<feature type="binding site" evidence="9">
    <location>
        <position position="111"/>
    </location>
    <ligand>
        <name>ATP</name>
        <dbReference type="ChEBI" id="CHEBI:30616"/>
    </ligand>
</feature>
<feature type="binding site" evidence="9">
    <location>
        <position position="148"/>
    </location>
    <ligand>
        <name>ATP</name>
        <dbReference type="ChEBI" id="CHEBI:30616"/>
    </ligand>
</feature>
<feature type="binding site" evidence="5">
    <location>
        <position position="148"/>
    </location>
    <ligand>
        <name>Zn(2+)</name>
        <dbReference type="ChEBI" id="CHEBI:29105"/>
        <label>2</label>
    </ligand>
</feature>
<feature type="binding site" evidence="9">
    <location>
        <position position="149"/>
    </location>
    <ligand>
        <name>ATP</name>
        <dbReference type="ChEBI" id="CHEBI:30616"/>
    </ligand>
</feature>
<feature type="binding site" evidence="5">
    <location>
        <position position="249"/>
    </location>
    <ligand>
        <name>Zn(2+)</name>
        <dbReference type="ChEBI" id="CHEBI:29105"/>
        <label>2</label>
    </ligand>
</feature>
<feature type="binding site" evidence="9">
    <location>
        <position position="257"/>
    </location>
    <ligand>
        <name>ATP</name>
        <dbReference type="ChEBI" id="CHEBI:30616"/>
    </ligand>
</feature>
<feature type="binding site" evidence="5">
    <location>
        <position position="290"/>
    </location>
    <ligand>
        <name>Zn(2+)</name>
        <dbReference type="ChEBI" id="CHEBI:29105"/>
        <label>2</label>
    </ligand>
</feature>
<feature type="binding site" evidence="5">
    <location>
        <position position="292"/>
    </location>
    <ligand>
        <name>Zn(2+)</name>
        <dbReference type="ChEBI" id="CHEBI:29105"/>
        <label>1</label>
    </ligand>
</feature>
<feature type="glycosylation site" description="N-linked (GlcNAc...) asparagine" evidence="2 5">
    <location>
        <position position="66"/>
    </location>
</feature>
<feature type="glycosylation site" description="N-linked (GlcNAc...) asparagine" evidence="2 5">
    <location>
        <position position="128"/>
    </location>
</feature>
<feature type="glycosylation site" description="N-linked (GlcNAc...) asparagine" evidence="2">
    <location>
        <position position="219"/>
    </location>
</feature>
<feature type="glycosylation site" description="N-linked (GlcNAc...) asparagine" evidence="2 5">
    <location>
        <position position="235"/>
    </location>
</feature>
<feature type="glycosylation site" description="N-linked (GlcNAc...) asparagine" evidence="2 5">
    <location>
        <position position="353"/>
    </location>
</feature>
<feature type="glycosylation site" description="N-linked (GlcNAc...) asparagine" evidence="2 5">
    <location>
        <position position="364"/>
    </location>
</feature>
<feature type="disulfide bond" evidence="5">
    <location>
        <begin position="59"/>
        <end position="78"/>
    </location>
</feature>
<feature type="disulfide bond" evidence="2">
    <location>
        <begin position="417"/>
        <end position="421"/>
    </location>
</feature>
<feature type="disulfide bond" evidence="5">
    <location>
        <begin position="427"/>
        <end position="440"/>
    </location>
</feature>
<feature type="mutagenesis site" description="Abolishes enzyme activity." evidence="5">
    <original>H</original>
    <variation>A</variation>
    <variation>Q</variation>
    <location>
        <position position="111"/>
    </location>
</feature>
<feature type="mutagenesis site" description="Abolishes enzyme activity." evidence="5">
    <original>H</original>
    <variation>A</variation>
    <location>
        <position position="149"/>
    </location>
</feature>
<feature type="mutagenesis site" description="Nearly abolishes enzyme activity." evidence="5">
    <original>H</original>
    <variation>Q</variation>
    <location>
        <position position="149"/>
    </location>
</feature>
<feature type="strand" evidence="11">
    <location>
        <begin position="35"/>
        <end position="40"/>
    </location>
</feature>
<feature type="helix" evidence="11">
    <location>
        <begin position="55"/>
        <end position="57"/>
    </location>
</feature>
<feature type="helix" evidence="11">
    <location>
        <begin position="60"/>
        <end position="62"/>
    </location>
</feature>
<feature type="helix" evidence="11">
    <location>
        <begin position="82"/>
        <end position="94"/>
    </location>
</feature>
<feature type="strand" evidence="11">
    <location>
        <begin position="100"/>
        <end position="104"/>
    </location>
</feature>
<feature type="helix" evidence="11">
    <location>
        <begin position="114"/>
        <end position="116"/>
    </location>
</feature>
<feature type="helix" evidence="11">
    <location>
        <begin position="119"/>
        <end position="136"/>
    </location>
</feature>
<feature type="strand" evidence="11">
    <location>
        <begin position="141"/>
        <end position="144"/>
    </location>
</feature>
<feature type="strand" evidence="11">
    <location>
        <begin position="150"/>
        <end position="153"/>
    </location>
</feature>
<feature type="helix" evidence="11">
    <location>
        <begin position="163"/>
        <end position="172"/>
    </location>
</feature>
<feature type="turn" evidence="11">
    <location>
        <begin position="173"/>
        <end position="175"/>
    </location>
</feature>
<feature type="helix" evidence="11">
    <location>
        <begin position="178"/>
        <end position="187"/>
    </location>
</feature>
<feature type="strand" evidence="11">
    <location>
        <begin position="190"/>
        <end position="193"/>
    </location>
</feature>
<feature type="strand" evidence="11">
    <location>
        <begin position="200"/>
        <end position="204"/>
    </location>
</feature>
<feature type="helix" evidence="11">
    <location>
        <begin position="207"/>
        <end position="210"/>
    </location>
</feature>
<feature type="helix" evidence="11">
    <location>
        <begin position="215"/>
        <end position="217"/>
    </location>
</feature>
<feature type="helix" evidence="11">
    <location>
        <begin position="223"/>
        <end position="225"/>
    </location>
</feature>
<feature type="helix" evidence="11">
    <location>
        <begin position="226"/>
        <end position="239"/>
    </location>
</feature>
<feature type="strand" evidence="11">
    <location>
        <begin position="243"/>
        <end position="250"/>
    </location>
</feature>
<feature type="strand" evidence="11">
    <location>
        <begin position="252"/>
        <end position="254"/>
    </location>
</feature>
<feature type="strand" evidence="11">
    <location>
        <begin position="258"/>
        <end position="260"/>
    </location>
</feature>
<feature type="strand" evidence="11">
    <location>
        <begin position="262"/>
        <end position="264"/>
    </location>
</feature>
<feature type="helix" evidence="11">
    <location>
        <begin position="266"/>
        <end position="278"/>
    </location>
</feature>
<feature type="turn" evidence="11">
    <location>
        <begin position="279"/>
        <end position="282"/>
    </location>
</feature>
<feature type="strand" evidence="11">
    <location>
        <begin position="283"/>
        <end position="288"/>
    </location>
</feature>
<feature type="strand" evidence="11">
    <location>
        <begin position="295"/>
        <end position="300"/>
    </location>
</feature>
<feature type="strand" evidence="11">
    <location>
        <begin position="306"/>
        <end position="312"/>
    </location>
</feature>
<feature type="strand" evidence="11">
    <location>
        <begin position="331"/>
        <end position="337"/>
    </location>
</feature>
<feature type="turn" evidence="11">
    <location>
        <begin position="339"/>
        <end position="341"/>
    </location>
</feature>
<feature type="strand" evidence="11">
    <location>
        <begin position="344"/>
        <end position="351"/>
    </location>
</feature>
<feature type="helix" evidence="11">
    <location>
        <begin position="354"/>
        <end position="360"/>
    </location>
</feature>
<feature type="strand" evidence="11">
    <location>
        <begin position="366"/>
        <end position="370"/>
    </location>
</feature>
<feature type="helix" evidence="11">
    <location>
        <begin position="371"/>
        <end position="375"/>
    </location>
</feature>
<feature type="helix" evidence="11">
    <location>
        <begin position="382"/>
        <end position="392"/>
    </location>
</feature>
<feature type="helix" evidence="11">
    <location>
        <begin position="398"/>
        <end position="407"/>
    </location>
</feature>
<feature type="turn" evidence="11">
    <location>
        <begin position="408"/>
        <end position="410"/>
    </location>
</feature>
<feature type="helix" evidence="11">
    <location>
        <begin position="419"/>
        <end position="430"/>
    </location>
</feature>
<feature type="helix" evidence="11">
    <location>
        <begin position="434"/>
        <end position="444"/>
    </location>
</feature>
<proteinExistence type="evidence at protein level"/>
<keyword id="KW-0002">3D-structure</keyword>
<keyword id="KW-1015">Disulfide bond</keyword>
<keyword id="KW-0325">Glycoprotein</keyword>
<keyword id="KW-0378">Hydrolase</keyword>
<keyword id="KW-0479">Metal-binding</keyword>
<keyword id="KW-1185">Reference proteome</keyword>
<keyword id="KW-0964">Secreted</keyword>
<keyword id="KW-0732">Signal</keyword>
<keyword id="KW-0862">Zinc</keyword>
<name>ASM3A_MOUSE</name>
<organism>
    <name type="scientific">Mus musculus</name>
    <name type="common">Mouse</name>
    <dbReference type="NCBI Taxonomy" id="10090"/>
    <lineage>
        <taxon>Eukaryota</taxon>
        <taxon>Metazoa</taxon>
        <taxon>Chordata</taxon>
        <taxon>Craniata</taxon>
        <taxon>Vertebrata</taxon>
        <taxon>Euteleostomi</taxon>
        <taxon>Mammalia</taxon>
        <taxon>Eutheria</taxon>
        <taxon>Euarchontoglires</taxon>
        <taxon>Glires</taxon>
        <taxon>Rodentia</taxon>
        <taxon>Myomorpha</taxon>
        <taxon>Muroidea</taxon>
        <taxon>Muridae</taxon>
        <taxon>Murinae</taxon>
        <taxon>Mus</taxon>
        <taxon>Mus</taxon>
    </lineage>
</organism>
<sequence length="445" mass="49858">MALLGNFLCCLLVAWLCGPGLGVPLAPADRAPAVGQFWHVTDLHLDPTYHITDDRTKVCASSKGANASNPGPFGDVLCDSPYQLILSAFDFIKNSGQEASFMIWTGDSPPHVPVPELSTGTVIKVITNMTMTVQNLFPNLQVFPALGNHDYWPQDQLPIVTSKVYSAVADLWKPWLGEEAISTLKKGGFYSQKVASNPGLRIISLNTNLYYGPNIMTLNKTDPANQFEWLENTLNSSLWNKEKVYIIAHVPVGYLPYATDTPAIRQYYNEKLLDIFRRYSSVIAGQFYGHTHRDSLMVLSDKNGNPLNSVFVAPAVTPVKGVLQKETNNPGVRLFQYKPGDYTLLDMVQYYLNLTEANLKGESNWTLEYVLTQAYSVADLQPKSLYALVQQFATKDSKQFLKYYHYYFVSYDSSATCDQHCKTLQVCAIMNLDSMSYDDCLKQHL</sequence>
<comment type="function">
    <text evidence="1 5 6">Cyclic-nucleotide phosphodiesterase that acts as a negative regulator of innate immunity by mediating degradation of 2',3'-cGAMP, thereby inhibiting the cGAS-STING signaling (PubMed:37890481). Specifically linearizes 2',3'-cGAMP into 2'5'-bond pGpA and further hydrolyzes pGpA to produce GpA (By similarity). Also has in vitro nucleotide phosphodiesterase activity with nucleoside triphosphates, such as ATP (PubMed:26792860). Has in vitro activity with p-nitrophenyl-TMP (By similarity). Has lower activity with nucleoside diphosphates, and no activity with nucleoside monophosphates (By similarity). Has in vitro activity with CDP-choline, giving rise to CMP and phosphocholine (By similarity). Has in vitro activity with CDP-ethanolamine (By similarity). Does not have sphingomyelin phosphodiesterase activity (By similarity).</text>
</comment>
<comment type="catalytic activity">
    <reaction evidence="1">
        <text>2',3'-cGAMP + H2O = 5'-pGpA(2'-5') + H(+)</text>
        <dbReference type="Rhea" id="RHEA:78339"/>
        <dbReference type="ChEBI" id="CHEBI:15377"/>
        <dbReference type="ChEBI" id="CHEBI:15378"/>
        <dbReference type="ChEBI" id="CHEBI:143093"/>
        <dbReference type="ChEBI" id="CHEBI:228270"/>
    </reaction>
    <physiologicalReaction direction="left-to-right" evidence="1">
        <dbReference type="Rhea" id="RHEA:78340"/>
    </physiologicalReaction>
</comment>
<comment type="catalytic activity">
    <reaction evidence="1">
        <text>5'-pGpA(2'-5') + H2O = 5'-GpA(2'-5') + phosphate</text>
        <dbReference type="Rhea" id="RHEA:78343"/>
        <dbReference type="ChEBI" id="CHEBI:15377"/>
        <dbReference type="ChEBI" id="CHEBI:43474"/>
        <dbReference type="ChEBI" id="CHEBI:228270"/>
        <dbReference type="ChEBI" id="CHEBI:228271"/>
    </reaction>
    <physiologicalReaction direction="left-to-right" evidence="1">
        <dbReference type="Rhea" id="RHEA:78344"/>
    </physiologicalReaction>
</comment>
<comment type="catalytic activity">
    <reaction evidence="5">
        <text>a ribonucleoside 5'-triphosphate + H2O = a ribonucleoside 5'-diphosphate + phosphate + H(+)</text>
        <dbReference type="Rhea" id="RHEA:23680"/>
        <dbReference type="ChEBI" id="CHEBI:15377"/>
        <dbReference type="ChEBI" id="CHEBI:15378"/>
        <dbReference type="ChEBI" id="CHEBI:43474"/>
        <dbReference type="ChEBI" id="CHEBI:57930"/>
        <dbReference type="ChEBI" id="CHEBI:61557"/>
        <dbReference type="EC" id="3.6.1.15"/>
    </reaction>
    <physiologicalReaction direction="left-to-right" evidence="5">
        <dbReference type="Rhea" id="RHEA:23681"/>
    </physiologicalReaction>
</comment>
<comment type="catalytic activity">
    <reaction evidence="5">
        <text>ATP + H2O = ADP + phosphate + H(+)</text>
        <dbReference type="Rhea" id="RHEA:13065"/>
        <dbReference type="ChEBI" id="CHEBI:15377"/>
        <dbReference type="ChEBI" id="CHEBI:15378"/>
        <dbReference type="ChEBI" id="CHEBI:30616"/>
        <dbReference type="ChEBI" id="CHEBI:43474"/>
        <dbReference type="ChEBI" id="CHEBI:456216"/>
    </reaction>
    <physiologicalReaction direction="left-to-right" evidence="5">
        <dbReference type="Rhea" id="RHEA:13066"/>
    </physiologicalReaction>
</comment>
<comment type="cofactor">
    <cofactor evidence="5">
        <name>Zn(2+)</name>
        <dbReference type="ChEBI" id="CHEBI:29105"/>
    </cofactor>
    <text evidence="5">Binds 2 Zn(2+) per subunit.</text>
</comment>
<comment type="activity regulation">
    <text evidence="5">Requires micromolar levels of Zn(2+) for activity. Inhibited by millimolar levels of Zn(2+).</text>
</comment>
<comment type="biophysicochemical properties">
    <kinetics>
        <KM evidence="5">107 uM for ATP at pH 5</KM>
        <KM evidence="5">330 uM for ATP at pH 7.5</KM>
    </kinetics>
</comment>
<comment type="subunit">
    <text evidence="1">Monomer. Homodimer; homodimerizes following 2',3'-cGAMP-binding.</text>
</comment>
<comment type="subcellular location">
    <subcellularLocation>
        <location evidence="3 4 5">Secreted</location>
    </subcellularLocation>
</comment>
<comment type="tissue specificity">
    <text evidence="3">Detected in blood serum (at protein level).</text>
</comment>
<comment type="PTM">
    <text evidence="4">N-glycosylated.</text>
</comment>
<comment type="similarity">
    <text evidence="8">Belongs to the acid sphingomyelinase family.</text>
</comment>
<gene>
    <name evidence="7 10" type="primary">Smpdl3a</name>
    <name type="synonym">Asml3a</name>
</gene>